<reference key="1">
    <citation type="journal article" date="2003" name="Proc. Natl. Acad. Sci. U.S.A.">
        <title>Complete genome sequence of Lactobacillus plantarum WCFS1.</title>
        <authorList>
            <person name="Kleerebezem M."/>
            <person name="Boekhorst J."/>
            <person name="van Kranenburg R."/>
            <person name="Molenaar D."/>
            <person name="Kuipers O.P."/>
            <person name="Leer R."/>
            <person name="Tarchini R."/>
            <person name="Peters S.A."/>
            <person name="Sandbrink H.M."/>
            <person name="Fiers M.W.E.J."/>
            <person name="Stiekema W."/>
            <person name="Klein Lankhorst R.M."/>
            <person name="Bron P.A."/>
            <person name="Hoffer S.M."/>
            <person name="Nierop Groot M.N."/>
            <person name="Kerkhoven R."/>
            <person name="De Vries M."/>
            <person name="Ursing B."/>
            <person name="De Vos W.M."/>
            <person name="Siezen R.J."/>
        </authorList>
    </citation>
    <scope>NUCLEOTIDE SEQUENCE [LARGE SCALE GENOMIC DNA]</scope>
    <source>
        <strain>ATCC BAA-793 / NCIMB 8826 / WCFS1</strain>
    </source>
</reference>
<reference key="2">
    <citation type="journal article" date="2012" name="J. Bacteriol.">
        <title>Complete resequencing and reannotation of the Lactobacillus plantarum WCFS1 genome.</title>
        <authorList>
            <person name="Siezen R.J."/>
            <person name="Francke C."/>
            <person name="Renckens B."/>
            <person name="Boekhorst J."/>
            <person name="Wels M."/>
            <person name="Kleerebezem M."/>
            <person name="van Hijum S.A."/>
        </authorList>
    </citation>
    <scope>NUCLEOTIDE SEQUENCE [LARGE SCALE GENOMIC DNA]</scope>
    <scope>GENOME REANNOTATION</scope>
    <source>
        <strain>ATCC BAA-793 / NCIMB 8826 / WCFS1</strain>
    </source>
</reference>
<accession>Q88YZ2</accession>
<accession>F9UL61</accession>
<dbReference type="EC" id="2.1.3.15" evidence="1"/>
<dbReference type="EMBL" id="AL935263">
    <property type="protein sequence ID" value="CCC78076.1"/>
    <property type="molecule type" value="Genomic_DNA"/>
</dbReference>
<dbReference type="RefSeq" id="WP_011101069.1">
    <property type="nucleotide sequence ID" value="NC_004567.2"/>
</dbReference>
<dbReference type="RefSeq" id="YP_004888590.1">
    <property type="nucleotide sequence ID" value="NC_004567.2"/>
</dbReference>
<dbReference type="SMR" id="Q88YZ2"/>
<dbReference type="STRING" id="220668.lp_0591"/>
<dbReference type="EnsemblBacteria" id="CCC78076">
    <property type="protein sequence ID" value="CCC78076"/>
    <property type="gene ID" value="lp_0591"/>
</dbReference>
<dbReference type="KEGG" id="lpl:lp_0591"/>
<dbReference type="PATRIC" id="fig|220668.9.peg.495"/>
<dbReference type="eggNOG" id="COG0777">
    <property type="taxonomic scope" value="Bacteria"/>
</dbReference>
<dbReference type="HOGENOM" id="CLU_015486_1_1_9"/>
<dbReference type="OrthoDB" id="9772975at2"/>
<dbReference type="PhylomeDB" id="Q88YZ2"/>
<dbReference type="UniPathway" id="UPA00655">
    <property type="reaction ID" value="UER00711"/>
</dbReference>
<dbReference type="Proteomes" id="UP000000432">
    <property type="component" value="Chromosome"/>
</dbReference>
<dbReference type="GO" id="GO:0009317">
    <property type="term" value="C:acetyl-CoA carboxylase complex"/>
    <property type="evidence" value="ECO:0007669"/>
    <property type="project" value="InterPro"/>
</dbReference>
<dbReference type="GO" id="GO:0003989">
    <property type="term" value="F:acetyl-CoA carboxylase activity"/>
    <property type="evidence" value="ECO:0007669"/>
    <property type="project" value="InterPro"/>
</dbReference>
<dbReference type="GO" id="GO:0005524">
    <property type="term" value="F:ATP binding"/>
    <property type="evidence" value="ECO:0007669"/>
    <property type="project" value="UniProtKB-KW"/>
</dbReference>
<dbReference type="GO" id="GO:0016743">
    <property type="term" value="F:carboxyl- or carbamoyltransferase activity"/>
    <property type="evidence" value="ECO:0007669"/>
    <property type="project" value="UniProtKB-UniRule"/>
</dbReference>
<dbReference type="GO" id="GO:0008270">
    <property type="term" value="F:zinc ion binding"/>
    <property type="evidence" value="ECO:0007669"/>
    <property type="project" value="UniProtKB-UniRule"/>
</dbReference>
<dbReference type="GO" id="GO:0006633">
    <property type="term" value="P:fatty acid biosynthetic process"/>
    <property type="evidence" value="ECO:0007669"/>
    <property type="project" value="UniProtKB-KW"/>
</dbReference>
<dbReference type="GO" id="GO:2001295">
    <property type="term" value="P:malonyl-CoA biosynthetic process"/>
    <property type="evidence" value="ECO:0007669"/>
    <property type="project" value="UniProtKB-UniRule"/>
</dbReference>
<dbReference type="Gene3D" id="3.90.226.10">
    <property type="entry name" value="2-enoyl-CoA Hydratase, Chain A, domain 1"/>
    <property type="match status" value="1"/>
</dbReference>
<dbReference type="HAMAP" id="MF_01395">
    <property type="entry name" value="AcetylCoA_CT_beta"/>
    <property type="match status" value="1"/>
</dbReference>
<dbReference type="InterPro" id="IPR034733">
    <property type="entry name" value="AcCoA_carboxyl_beta"/>
</dbReference>
<dbReference type="InterPro" id="IPR000438">
    <property type="entry name" value="Acetyl_CoA_COase_Trfase_b_su"/>
</dbReference>
<dbReference type="InterPro" id="IPR029045">
    <property type="entry name" value="ClpP/crotonase-like_dom_sf"/>
</dbReference>
<dbReference type="InterPro" id="IPR011762">
    <property type="entry name" value="COA_CT_N"/>
</dbReference>
<dbReference type="PANTHER" id="PTHR42995">
    <property type="entry name" value="ACETYL-COENZYME A CARBOXYLASE CARBOXYL TRANSFERASE SUBUNIT BETA, CHLOROPLASTIC"/>
    <property type="match status" value="1"/>
</dbReference>
<dbReference type="PANTHER" id="PTHR42995:SF5">
    <property type="entry name" value="ACETYL-COENZYME A CARBOXYLASE CARBOXYL TRANSFERASE SUBUNIT BETA, CHLOROPLASTIC"/>
    <property type="match status" value="1"/>
</dbReference>
<dbReference type="Pfam" id="PF01039">
    <property type="entry name" value="Carboxyl_trans"/>
    <property type="match status" value="1"/>
</dbReference>
<dbReference type="PRINTS" id="PR01070">
    <property type="entry name" value="ACCCTRFRASEB"/>
</dbReference>
<dbReference type="SUPFAM" id="SSF52096">
    <property type="entry name" value="ClpP/crotonase"/>
    <property type="match status" value="1"/>
</dbReference>
<dbReference type="PROSITE" id="PS50980">
    <property type="entry name" value="COA_CT_NTER"/>
    <property type="match status" value="1"/>
</dbReference>
<gene>
    <name evidence="1" type="primary">accD1</name>
    <name type="ordered locus">lp_0591</name>
</gene>
<protein>
    <recommendedName>
        <fullName evidence="1">Acetyl-coenzyme A carboxylase carboxyl transferase subunit beta 1</fullName>
        <shortName evidence="1">ACCase subunit beta 1</shortName>
        <shortName evidence="1">Acetyl-CoA carboxylase carboxyltransferase subunit beta 1</shortName>
        <ecNumber evidence="1">2.1.3.15</ecNumber>
    </recommendedName>
</protein>
<proteinExistence type="inferred from homology"/>
<keyword id="KW-0067">ATP-binding</keyword>
<keyword id="KW-0963">Cytoplasm</keyword>
<keyword id="KW-0275">Fatty acid biosynthesis</keyword>
<keyword id="KW-0276">Fatty acid metabolism</keyword>
<keyword id="KW-0444">Lipid biosynthesis</keyword>
<keyword id="KW-0443">Lipid metabolism</keyword>
<keyword id="KW-0479">Metal-binding</keyword>
<keyword id="KW-0547">Nucleotide-binding</keyword>
<keyword id="KW-1185">Reference proteome</keyword>
<keyword id="KW-0808">Transferase</keyword>
<keyword id="KW-0862">Zinc</keyword>
<keyword id="KW-0863">Zinc-finger</keyword>
<name>ACCD1_LACPL</name>
<evidence type="ECO:0000255" key="1">
    <source>
        <dbReference type="HAMAP-Rule" id="MF_01395"/>
    </source>
</evidence>
<evidence type="ECO:0000255" key="2">
    <source>
        <dbReference type="PROSITE-ProRule" id="PRU01136"/>
    </source>
</evidence>
<comment type="function">
    <text evidence="1">Component of the acetyl coenzyme A carboxylase (ACC) complex. Biotin carboxylase (BC) catalyzes the carboxylation of biotin on its carrier protein (BCCP) and then the CO(2) group is transferred by the transcarboxylase to acetyl-CoA to form malonyl-CoA.</text>
</comment>
<comment type="catalytic activity">
    <reaction evidence="1">
        <text>N(6)-carboxybiotinyl-L-lysyl-[protein] + acetyl-CoA = N(6)-biotinyl-L-lysyl-[protein] + malonyl-CoA</text>
        <dbReference type="Rhea" id="RHEA:54728"/>
        <dbReference type="Rhea" id="RHEA-COMP:10505"/>
        <dbReference type="Rhea" id="RHEA-COMP:10506"/>
        <dbReference type="ChEBI" id="CHEBI:57288"/>
        <dbReference type="ChEBI" id="CHEBI:57384"/>
        <dbReference type="ChEBI" id="CHEBI:83144"/>
        <dbReference type="ChEBI" id="CHEBI:83145"/>
        <dbReference type="EC" id="2.1.3.15"/>
    </reaction>
</comment>
<comment type="cofactor">
    <cofactor evidence="1">
        <name>Zn(2+)</name>
        <dbReference type="ChEBI" id="CHEBI:29105"/>
    </cofactor>
    <text evidence="1">Binds 1 zinc ion per subunit.</text>
</comment>
<comment type="pathway">
    <text evidence="1">Lipid metabolism; malonyl-CoA biosynthesis; malonyl-CoA from acetyl-CoA: step 1/1.</text>
</comment>
<comment type="subunit">
    <text evidence="1">Acetyl-CoA carboxylase is a heterohexamer composed of biotin carboxyl carrier protein (AccB), biotin carboxylase (AccC) and two subunits each of ACCase subunit alpha (AccA) and ACCase subunit beta (AccD).</text>
</comment>
<comment type="subcellular location">
    <subcellularLocation>
        <location evidence="1">Cytoplasm</location>
    </subcellularLocation>
</comment>
<comment type="similarity">
    <text evidence="1">Belongs to the AccD/PCCB family.</text>
</comment>
<feature type="chain" id="PRO_0000389768" description="Acetyl-coenzyme A carboxylase carboxyl transferase subunit beta 1">
    <location>
        <begin position="1"/>
        <end position="267"/>
    </location>
</feature>
<feature type="domain" description="CoA carboxyltransferase N-terminal" evidence="2">
    <location>
        <begin position="9"/>
        <end position="267"/>
    </location>
</feature>
<feature type="zinc finger region" description="C4-type" evidence="1">
    <location>
        <begin position="13"/>
        <end position="34"/>
    </location>
</feature>
<feature type="binding site" evidence="1">
    <location>
        <position position="13"/>
    </location>
    <ligand>
        <name>Zn(2+)</name>
        <dbReference type="ChEBI" id="CHEBI:29105"/>
    </ligand>
</feature>
<feature type="binding site" evidence="1">
    <location>
        <position position="16"/>
    </location>
    <ligand>
        <name>Zn(2+)</name>
        <dbReference type="ChEBI" id="CHEBI:29105"/>
    </ligand>
</feature>
<feature type="binding site" evidence="1">
    <location>
        <position position="31"/>
    </location>
    <ligand>
        <name>Zn(2+)</name>
        <dbReference type="ChEBI" id="CHEBI:29105"/>
    </ligand>
</feature>
<feature type="binding site" evidence="1">
    <location>
        <position position="34"/>
    </location>
    <ligand>
        <name>Zn(2+)</name>
        <dbReference type="ChEBI" id="CHEBI:29105"/>
    </ligand>
</feature>
<sequence>MSHYPASGTWQACPKCGRHVHQRQWGTYQQCPYCHYWQRLTTAQRLEQLVDEGSFQPLTMTERPVNQLGFPDYMNKLRRAQRQTGLNEAVVCGTALIEQQPCILAVMDSHFMMGTLNTAVTRRLLHASEQARAQRLPLIIVTASGGARMQEGVYALVGMNLILAELARLAATPLPLITVLTDPTMGGVSASFAFKGDLIIAEAGAKIGFAGARVIQQTLPVKLPADFQTADQLFKNGMVDAVVERPQLRSTLGQALVNYGIGRSAHG</sequence>
<organism>
    <name type="scientific">Lactiplantibacillus plantarum (strain ATCC BAA-793 / NCIMB 8826 / WCFS1)</name>
    <name type="common">Lactobacillus plantarum</name>
    <dbReference type="NCBI Taxonomy" id="220668"/>
    <lineage>
        <taxon>Bacteria</taxon>
        <taxon>Bacillati</taxon>
        <taxon>Bacillota</taxon>
        <taxon>Bacilli</taxon>
        <taxon>Lactobacillales</taxon>
        <taxon>Lactobacillaceae</taxon>
        <taxon>Lactiplantibacillus</taxon>
    </lineage>
</organism>